<sequence>MLVCIPEVLSKDEVAEFRRIMDAAEWEDGRATAGAQSALVKRNEQLPPDGEVARQLGARVVRALLANPHFVSAAIPLQIFPPLFNRYGEGHHFGMHVDNAVRGDPLTGLRIRTDLSVTLFLAEPDEYDGGELVAEDYYGTQEVKLPAGDLVLYPSSSLHRVTPVTRGTRVASFFWLQSMVRSPQARSLIYDLDGAIQGLAAELGQDHAEVVRLAGIYHNLIRTWAEV</sequence>
<protein>
    <recommendedName>
        <fullName evidence="1">PKHD-type hydroxylase M446_1130</fullName>
        <ecNumber evidence="1">1.14.11.-</ecNumber>
    </recommendedName>
</protein>
<keyword id="KW-0223">Dioxygenase</keyword>
<keyword id="KW-0408">Iron</keyword>
<keyword id="KW-0479">Metal-binding</keyword>
<keyword id="KW-0560">Oxidoreductase</keyword>
<keyword id="KW-0847">Vitamin C</keyword>
<accession>B0UEE1</accession>
<evidence type="ECO:0000255" key="1">
    <source>
        <dbReference type="HAMAP-Rule" id="MF_00657"/>
    </source>
</evidence>
<organism>
    <name type="scientific">Methylobacterium sp. (strain 4-46)</name>
    <dbReference type="NCBI Taxonomy" id="426117"/>
    <lineage>
        <taxon>Bacteria</taxon>
        <taxon>Pseudomonadati</taxon>
        <taxon>Pseudomonadota</taxon>
        <taxon>Alphaproteobacteria</taxon>
        <taxon>Hyphomicrobiales</taxon>
        <taxon>Methylobacteriaceae</taxon>
        <taxon>Methylobacterium</taxon>
    </lineage>
</organism>
<dbReference type="EC" id="1.14.11.-" evidence="1"/>
<dbReference type="EMBL" id="CP000943">
    <property type="protein sequence ID" value="ACA15657.1"/>
    <property type="molecule type" value="Genomic_DNA"/>
</dbReference>
<dbReference type="RefSeq" id="WP_012331074.1">
    <property type="nucleotide sequence ID" value="NC_010511.1"/>
</dbReference>
<dbReference type="SMR" id="B0UEE1"/>
<dbReference type="STRING" id="426117.M446_1130"/>
<dbReference type="KEGG" id="met:M446_1130"/>
<dbReference type="eggNOG" id="COG3128">
    <property type="taxonomic scope" value="Bacteria"/>
</dbReference>
<dbReference type="HOGENOM" id="CLU_106663_0_0_5"/>
<dbReference type="GO" id="GO:0016706">
    <property type="term" value="F:2-oxoglutarate-dependent dioxygenase activity"/>
    <property type="evidence" value="ECO:0007669"/>
    <property type="project" value="UniProtKB-UniRule"/>
</dbReference>
<dbReference type="GO" id="GO:0005506">
    <property type="term" value="F:iron ion binding"/>
    <property type="evidence" value="ECO:0007669"/>
    <property type="project" value="UniProtKB-UniRule"/>
</dbReference>
<dbReference type="GO" id="GO:0031418">
    <property type="term" value="F:L-ascorbic acid binding"/>
    <property type="evidence" value="ECO:0007669"/>
    <property type="project" value="UniProtKB-KW"/>
</dbReference>
<dbReference type="GO" id="GO:0006974">
    <property type="term" value="P:DNA damage response"/>
    <property type="evidence" value="ECO:0007669"/>
    <property type="project" value="TreeGrafter"/>
</dbReference>
<dbReference type="GO" id="GO:0006879">
    <property type="term" value="P:intracellular iron ion homeostasis"/>
    <property type="evidence" value="ECO:0007669"/>
    <property type="project" value="TreeGrafter"/>
</dbReference>
<dbReference type="Gene3D" id="2.60.120.620">
    <property type="entry name" value="q2cbj1_9rhob like domain"/>
    <property type="match status" value="1"/>
</dbReference>
<dbReference type="Gene3D" id="4.10.860.20">
    <property type="entry name" value="Rabenosyn, Rab binding domain"/>
    <property type="match status" value="1"/>
</dbReference>
<dbReference type="HAMAP" id="MF_00657">
    <property type="entry name" value="Hydroxyl_YbiX"/>
    <property type="match status" value="1"/>
</dbReference>
<dbReference type="InterPro" id="IPR005123">
    <property type="entry name" value="Oxoglu/Fe-dep_dioxygenase_dom"/>
</dbReference>
<dbReference type="InterPro" id="IPR041097">
    <property type="entry name" value="PKHD_C"/>
</dbReference>
<dbReference type="InterPro" id="IPR023550">
    <property type="entry name" value="PKHD_hydroxylase"/>
</dbReference>
<dbReference type="InterPro" id="IPR006620">
    <property type="entry name" value="Pro_4_hyd_alph"/>
</dbReference>
<dbReference type="InterPro" id="IPR044862">
    <property type="entry name" value="Pro_4_hyd_alph_FE2OG_OXY"/>
</dbReference>
<dbReference type="NCBIfam" id="NF003973">
    <property type="entry name" value="PRK05467.1-2"/>
    <property type="match status" value="1"/>
</dbReference>
<dbReference type="NCBIfam" id="NF003974">
    <property type="entry name" value="PRK05467.1-3"/>
    <property type="match status" value="1"/>
</dbReference>
<dbReference type="NCBIfam" id="NF003975">
    <property type="entry name" value="PRK05467.1-4"/>
    <property type="match status" value="1"/>
</dbReference>
<dbReference type="PANTHER" id="PTHR41536">
    <property type="entry name" value="PKHD-TYPE HYDROXYLASE YBIX"/>
    <property type="match status" value="1"/>
</dbReference>
<dbReference type="PANTHER" id="PTHR41536:SF1">
    <property type="entry name" value="PKHD-TYPE HYDROXYLASE YBIX"/>
    <property type="match status" value="1"/>
</dbReference>
<dbReference type="Pfam" id="PF13640">
    <property type="entry name" value="2OG-FeII_Oxy_3"/>
    <property type="match status" value="1"/>
</dbReference>
<dbReference type="Pfam" id="PF18331">
    <property type="entry name" value="PKHD_C"/>
    <property type="match status" value="1"/>
</dbReference>
<dbReference type="SMART" id="SM00702">
    <property type="entry name" value="P4Hc"/>
    <property type="match status" value="1"/>
</dbReference>
<dbReference type="SUPFAM" id="SSF51197">
    <property type="entry name" value="Clavaminate synthase-like"/>
    <property type="match status" value="1"/>
</dbReference>
<dbReference type="PROSITE" id="PS51471">
    <property type="entry name" value="FE2OG_OXY"/>
    <property type="match status" value="1"/>
</dbReference>
<reference key="1">
    <citation type="submission" date="2008-02" db="EMBL/GenBank/DDBJ databases">
        <title>Complete sequence of chromosome of Methylobacterium sp. 4-46.</title>
        <authorList>
            <consortium name="US DOE Joint Genome Institute"/>
            <person name="Copeland A."/>
            <person name="Lucas S."/>
            <person name="Lapidus A."/>
            <person name="Glavina del Rio T."/>
            <person name="Dalin E."/>
            <person name="Tice H."/>
            <person name="Bruce D."/>
            <person name="Goodwin L."/>
            <person name="Pitluck S."/>
            <person name="Chertkov O."/>
            <person name="Brettin T."/>
            <person name="Detter J.C."/>
            <person name="Han C."/>
            <person name="Kuske C.R."/>
            <person name="Schmutz J."/>
            <person name="Larimer F."/>
            <person name="Land M."/>
            <person name="Hauser L."/>
            <person name="Kyrpides N."/>
            <person name="Ivanova N."/>
            <person name="Marx C.J."/>
            <person name="Richardson P."/>
        </authorList>
    </citation>
    <scope>NUCLEOTIDE SEQUENCE [LARGE SCALE GENOMIC DNA]</scope>
    <source>
        <strain>4-46</strain>
    </source>
</reference>
<comment type="cofactor">
    <cofactor evidence="1">
        <name>Fe(2+)</name>
        <dbReference type="ChEBI" id="CHEBI:29033"/>
    </cofactor>
    <text evidence="1">Binds 1 Fe(2+) ion per subunit.</text>
</comment>
<comment type="cofactor">
    <cofactor evidence="1">
        <name>L-ascorbate</name>
        <dbReference type="ChEBI" id="CHEBI:38290"/>
    </cofactor>
</comment>
<feature type="chain" id="PRO_0000346493" description="PKHD-type hydroxylase M446_1130">
    <location>
        <begin position="1"/>
        <end position="227"/>
    </location>
</feature>
<feature type="domain" description="Fe2OG dioxygenase" evidence="1">
    <location>
        <begin position="78"/>
        <end position="178"/>
    </location>
</feature>
<feature type="binding site" evidence="1">
    <location>
        <position position="96"/>
    </location>
    <ligand>
        <name>Fe cation</name>
        <dbReference type="ChEBI" id="CHEBI:24875"/>
    </ligand>
</feature>
<feature type="binding site" evidence="1">
    <location>
        <position position="98"/>
    </location>
    <ligand>
        <name>Fe cation</name>
        <dbReference type="ChEBI" id="CHEBI:24875"/>
    </ligand>
</feature>
<feature type="binding site" evidence="1">
    <location>
        <position position="159"/>
    </location>
    <ligand>
        <name>Fe cation</name>
        <dbReference type="ChEBI" id="CHEBI:24875"/>
    </ligand>
</feature>
<feature type="binding site" evidence="1">
    <location>
        <position position="169"/>
    </location>
    <ligand>
        <name>2-oxoglutarate</name>
        <dbReference type="ChEBI" id="CHEBI:16810"/>
    </ligand>
</feature>
<name>Y1130_METS4</name>
<proteinExistence type="inferred from homology"/>
<gene>
    <name type="ordered locus">M446_1130</name>
</gene>